<organism>
    <name type="scientific">Candida albicans (strain SC5314 / ATCC MYA-2876)</name>
    <name type="common">Yeast</name>
    <dbReference type="NCBI Taxonomy" id="237561"/>
    <lineage>
        <taxon>Eukaryota</taxon>
        <taxon>Fungi</taxon>
        <taxon>Dikarya</taxon>
        <taxon>Ascomycota</taxon>
        <taxon>Saccharomycotina</taxon>
        <taxon>Pichiomycetes</taxon>
        <taxon>Debaryomycetaceae</taxon>
        <taxon>Candida/Lodderomyces clade</taxon>
        <taxon>Candida</taxon>
    </lineage>
</organism>
<protein>
    <recommendedName>
        <fullName evidence="1">Dol-P-Glc:Glc(2)Man(9)GlcNAc(2)-PP-Dol alpha-1,2-glucosyltransferase</fullName>
        <ecNumber evidence="1">2.4.1.256</ecNumber>
    </recommendedName>
    <alternativeName>
        <fullName>Alpha-1,2-glucosyltransferase ALG10-A</fullName>
    </alternativeName>
    <alternativeName>
        <fullName>Alpha-2-glucosyltransferase ALG10</fullName>
    </alternativeName>
    <alternativeName>
        <fullName>Asparagine-linked glycosylation protein 10</fullName>
    </alternativeName>
    <alternativeName>
        <fullName>Dolichyl-phosphoglucose-dependent glucosyltransferase ALG10</fullName>
    </alternativeName>
</protein>
<proteinExistence type="inferred from homology"/>
<name>ALG10_CANAL</name>
<gene>
    <name type="primary">DIE2</name>
    <name type="synonym">ALG10</name>
    <name type="ordered locus">CAALFM_C305340WA</name>
    <name type="ORF">CaO19.6971</name>
</gene>
<keyword id="KW-0256">Endoplasmic reticulum</keyword>
<keyword id="KW-0325">Glycoprotein</keyword>
<keyword id="KW-0328">Glycosyltransferase</keyword>
<keyword id="KW-0472">Membrane</keyword>
<keyword id="KW-1185">Reference proteome</keyword>
<keyword id="KW-0808">Transferase</keyword>
<keyword id="KW-0812">Transmembrane</keyword>
<keyword id="KW-1133">Transmembrane helix</keyword>
<evidence type="ECO:0000250" key="1">
    <source>
        <dbReference type="UniProtKB" id="P50076"/>
    </source>
</evidence>
<evidence type="ECO:0000255" key="2"/>
<evidence type="ECO:0000305" key="3"/>
<sequence>MPLIIPSNDIYISIISKYVAIVIFLIFVIIMFNNITHHLTQPYIDEIFHLRQCQTYCQYNFHHWDNKITTPPGLYILGFIYSEGIKILTRSSSTGGGGGGGHLTCFNDNVLRSINLIGGVVILPRILQQFHNGWSKNSKNQFFWSINIISQPLLFTYYFLFYTDVSSTILIILSLGLINYKLLQYPMLSALVGFMSLWFRQTNIIWIAFIASIFIDRQIKIKTGVIDRIRQFIMKSLTNWNKLLGYIVNIILFVIFLKLNGGITLGDNDNHQIELHIVQVFYCFTFITFFTIPNWLNKSTIKKYYNFIINHIILNLVIGLIIWYIMENFTIVHPFLLADNRHYAFYIYKRLLSQSYLKPLILMAYHFSSFQIISSLIKGGQLSFIGIFSYLIAVGLTLIPSPLFEPRYYITPLIIFNLYINHPHNLLEFIWLNSINLITSYIFLHKGIIW</sequence>
<comment type="function">
    <text evidence="1">Dol-P-Glc:Glc(2)Man(9)GlcNAc(2)-PP-Dol alpha-1,2-glucosyltransferase that operates in the biosynthetic pathway of dolichol-linked oligosaccharides, the glycan precursors employed in protein asparagine (N)-glycosylation. The assembly of dolichol-linked oligosaccharides begins on the cytosolic side of the endoplasmic reticulum membrane and finishes in its lumen. The sequential addition of sugars to dolichol pyrophosphate produces dolichol-linked oligosaccharides containing fourteen sugars, including two GlcNAcs, nine mannoses and three glucoses. Once assembled, the oligosaccharide is transferred from the lipid to nascent proteins by oligosaccharyltransferases. In the lumen of the endoplasmic reticulum, adds the third and last glucose residue from dolichyl phosphate glucose (Dol-P-Glc) onto the lipid-linked oligosaccharide intermediate Glc(2)Man(9)GlcNAc(2)-PP-Dol to produce Glc(3)Man(9)GlcNAc(2)-PP-Dol.</text>
</comment>
<comment type="catalytic activity">
    <reaction evidence="1">
        <text>an alpha-D-Glc-(1-&gt;3)-alpha-D-Glc-(1-&gt;3)-alpha-D-Man-(1-&gt;2)-alpha-D-Man-(1-&gt;2)-alpha-D-Man-(1-&gt;3)-[alpha-D-Man-(1-&gt;2)-alpha-D-Man-(1-&gt;3)-[alpha-D-Man-(1-&gt;2)-alpha-D-Man-(1-&gt;6)]-alpha-D-Man-(1-&gt;6)]-beta-D-Man-(1-&gt;4)-beta-D-GlcNAc-(1-&gt;4)-alpha-D-GlcNAc-diphospho-di-trans,poly-cis-dolichol + a di-trans,poly-cis-dolichyl beta-D-glucosyl phosphate = a alpha-D-Glc-(1-&gt;2)-alpha-D-Glc-(1-&gt;3)-alpha-D-Glc-(1-&gt;3)-alpha-D-Man-(1-&gt;2)-alpha-D-Man-(1-&gt;2)-alpha-D-Man-(1-&gt;3)-[alpha-D-Man-(1-&gt;2)-alpha-D-Man-(1-&gt;3)-[alpha-D-Man-(1-&gt;2)-alpha-D-Man-(1-&gt;6)]-alpha-D-Man-(1-&gt;6)]-beta-D-Man-(1-&gt;4)-beta-D-GlcNAc-(1-&gt;4)-alpha-D-GlcNAc-diphospho-di-trans,poly-cis-dolichol + a di-trans,poly-cis-dolichyl phosphate + H(+)</text>
        <dbReference type="Rhea" id="RHEA:29543"/>
        <dbReference type="Rhea" id="RHEA-COMP:19498"/>
        <dbReference type="Rhea" id="RHEA-COMP:19502"/>
        <dbReference type="Rhea" id="RHEA-COMP:19512"/>
        <dbReference type="Rhea" id="RHEA-COMP:19522"/>
        <dbReference type="ChEBI" id="CHEBI:15378"/>
        <dbReference type="ChEBI" id="CHEBI:57525"/>
        <dbReference type="ChEBI" id="CHEBI:57683"/>
        <dbReference type="ChEBI" id="CHEBI:132522"/>
        <dbReference type="ChEBI" id="CHEBI:132523"/>
        <dbReference type="EC" id="2.4.1.256"/>
    </reaction>
    <physiologicalReaction direction="left-to-right" evidence="1">
        <dbReference type="Rhea" id="RHEA:29544"/>
    </physiologicalReaction>
</comment>
<comment type="pathway">
    <text evidence="1">Protein modification; protein glycosylation.</text>
</comment>
<comment type="subcellular location">
    <subcellularLocation>
        <location evidence="1">Endoplasmic reticulum membrane</location>
        <topology evidence="2">Multi-pass membrane protein</topology>
    </subcellularLocation>
</comment>
<comment type="similarity">
    <text evidence="3">Belongs to the ALG10 glucosyltransferase family.</text>
</comment>
<comment type="sequence caution" evidence="3">
    <conflict type="erroneous initiation">
        <sequence resource="EMBL-CDS" id="AOW28548"/>
    </conflict>
    <text>Truncated N-terminus.</text>
</comment>
<feature type="chain" id="PRO_0000215452" description="Dol-P-Glc:Glc(2)Man(9)GlcNAc(2)-PP-Dol alpha-1,2-glucosyltransferase">
    <location>
        <begin position="1"/>
        <end position="450"/>
    </location>
</feature>
<feature type="transmembrane region" description="Helical" evidence="2">
    <location>
        <begin position="12"/>
        <end position="32"/>
    </location>
</feature>
<feature type="transmembrane region" description="Helical" evidence="2">
    <location>
        <begin position="158"/>
        <end position="178"/>
    </location>
</feature>
<feature type="transmembrane region" description="Helical" evidence="2">
    <location>
        <begin position="190"/>
        <end position="210"/>
    </location>
</feature>
<feature type="transmembrane region" description="Helical" evidence="2">
    <location>
        <begin position="243"/>
        <end position="263"/>
    </location>
</feature>
<feature type="transmembrane region" description="Helical" evidence="2">
    <location>
        <begin position="273"/>
        <end position="293"/>
    </location>
</feature>
<feature type="transmembrane region" description="Helical" evidence="2">
    <location>
        <begin position="312"/>
        <end position="332"/>
    </location>
</feature>
<feature type="transmembrane region" description="Helical" evidence="2">
    <location>
        <begin position="357"/>
        <end position="377"/>
    </location>
</feature>
<feature type="transmembrane region" description="Helical" evidence="2">
    <location>
        <begin position="384"/>
        <end position="404"/>
    </location>
</feature>
<feature type="transmembrane region" description="Helical" evidence="2">
    <location>
        <begin position="429"/>
        <end position="449"/>
    </location>
</feature>
<feature type="glycosylation site" description="N-linked (GlcNAc...) asparagine" evidence="2">
    <location>
        <position position="34"/>
    </location>
</feature>
<feature type="glycosylation site" description="N-linked (GlcNAc...) asparagine" evidence="2">
    <location>
        <position position="297"/>
    </location>
</feature>
<accession>Q59YV2</accession>
<accession>A0A1D8PKD6</accession>
<reference key="1">
    <citation type="journal article" date="2004" name="Proc. Natl. Acad. Sci. U.S.A.">
        <title>The diploid genome sequence of Candida albicans.</title>
        <authorList>
            <person name="Jones T."/>
            <person name="Federspiel N.A."/>
            <person name="Chibana H."/>
            <person name="Dungan J."/>
            <person name="Kalman S."/>
            <person name="Magee B.B."/>
            <person name="Newport G."/>
            <person name="Thorstenson Y.R."/>
            <person name="Agabian N."/>
            <person name="Magee P.T."/>
            <person name="Davis R.W."/>
            <person name="Scherer S."/>
        </authorList>
    </citation>
    <scope>NUCLEOTIDE SEQUENCE [LARGE SCALE GENOMIC DNA]</scope>
    <source>
        <strain>SC5314 / ATCC MYA-2876</strain>
    </source>
</reference>
<reference key="2">
    <citation type="journal article" date="2007" name="Genome Biol.">
        <title>Assembly of the Candida albicans genome into sixteen supercontigs aligned on the eight chromosomes.</title>
        <authorList>
            <person name="van het Hoog M."/>
            <person name="Rast T.J."/>
            <person name="Martchenko M."/>
            <person name="Grindle S."/>
            <person name="Dignard D."/>
            <person name="Hogues H."/>
            <person name="Cuomo C."/>
            <person name="Berriman M."/>
            <person name="Scherer S."/>
            <person name="Magee B.B."/>
            <person name="Whiteway M."/>
            <person name="Chibana H."/>
            <person name="Nantel A."/>
            <person name="Magee P.T."/>
        </authorList>
    </citation>
    <scope>GENOME REANNOTATION</scope>
    <source>
        <strain>SC5314 / ATCC MYA-2876</strain>
    </source>
</reference>
<reference key="3">
    <citation type="journal article" date="2013" name="Genome Biol.">
        <title>Assembly of a phased diploid Candida albicans genome facilitates allele-specific measurements and provides a simple model for repeat and indel structure.</title>
        <authorList>
            <person name="Muzzey D."/>
            <person name="Schwartz K."/>
            <person name="Weissman J.S."/>
            <person name="Sherlock G."/>
        </authorList>
    </citation>
    <scope>NUCLEOTIDE SEQUENCE [LARGE SCALE GENOMIC DNA]</scope>
    <scope>GENOME REANNOTATION</scope>
    <source>
        <strain>SC5314 / ATCC MYA-2876</strain>
    </source>
</reference>
<dbReference type="EC" id="2.4.1.256" evidence="1"/>
<dbReference type="EMBL" id="CP017625">
    <property type="protein sequence ID" value="AOW28548.1"/>
    <property type="status" value="ALT_INIT"/>
    <property type="molecule type" value="Genomic_DNA"/>
</dbReference>
<dbReference type="RefSeq" id="XP_714677.2">
    <property type="nucleotide sequence ID" value="XM_709584.2"/>
</dbReference>
<dbReference type="BioGRID" id="1226768">
    <property type="interactions" value="1"/>
</dbReference>
<dbReference type="FunCoup" id="Q59YV2">
    <property type="interactions" value="700"/>
</dbReference>
<dbReference type="STRING" id="237561.Q59YV2"/>
<dbReference type="GlyCosmos" id="Q59YV2">
    <property type="glycosylation" value="2 sites, No reported glycans"/>
</dbReference>
<dbReference type="GeneID" id="3643674"/>
<dbReference type="KEGG" id="cal:CAALFM_C305340WA"/>
<dbReference type="eggNOG" id="KOG2642">
    <property type="taxonomic scope" value="Eukaryota"/>
</dbReference>
<dbReference type="HOGENOM" id="CLU_017053_1_0_1"/>
<dbReference type="InParanoid" id="Q59YV2"/>
<dbReference type="OrthoDB" id="4769at2759"/>
<dbReference type="UniPathway" id="UPA00378"/>
<dbReference type="Proteomes" id="UP000000559">
    <property type="component" value="Chromosome 3"/>
</dbReference>
<dbReference type="GO" id="GO:0005783">
    <property type="term" value="C:endoplasmic reticulum"/>
    <property type="evidence" value="ECO:0000318"/>
    <property type="project" value="GO_Central"/>
</dbReference>
<dbReference type="GO" id="GO:0005789">
    <property type="term" value="C:endoplasmic reticulum membrane"/>
    <property type="evidence" value="ECO:0007669"/>
    <property type="project" value="UniProtKB-SubCell"/>
</dbReference>
<dbReference type="GO" id="GO:0106073">
    <property type="term" value="F:dolichyl pyrophosphate Glc2Man9GlcNAc2 alpha-1,2-glucosyltransferase activity"/>
    <property type="evidence" value="ECO:0000318"/>
    <property type="project" value="GO_Central"/>
</dbReference>
<dbReference type="GO" id="GO:0006488">
    <property type="term" value="P:dolichol-linked oligosaccharide biosynthetic process"/>
    <property type="evidence" value="ECO:0007669"/>
    <property type="project" value="InterPro"/>
</dbReference>
<dbReference type="GO" id="GO:0006487">
    <property type="term" value="P:protein N-linked glycosylation"/>
    <property type="evidence" value="ECO:0000318"/>
    <property type="project" value="GO_Central"/>
</dbReference>
<dbReference type="InterPro" id="IPR016900">
    <property type="entry name" value="Alg10"/>
</dbReference>
<dbReference type="PANTHER" id="PTHR12989">
    <property type="entry name" value="ALPHA-1,2-GLUCOSYLTRANSFERASE ALG10"/>
    <property type="match status" value="1"/>
</dbReference>
<dbReference type="PANTHER" id="PTHR12989:SF10">
    <property type="entry name" value="DOL-P-GLC:GLC(2)MAN(9)GLCNAC(2)-PP-DOL ALPHA-1,2-GLUCOSYLTRANSFERASE-RELATED"/>
    <property type="match status" value="1"/>
</dbReference>
<dbReference type="Pfam" id="PF04922">
    <property type="entry name" value="DIE2_ALG10"/>
    <property type="match status" value="1"/>
</dbReference>
<dbReference type="PIRSF" id="PIRSF028810">
    <property type="entry name" value="Alpha1_2_glucosyltferase_Alg10"/>
    <property type="match status" value="1"/>
</dbReference>